<name>MRT4_BOVIN</name>
<organism>
    <name type="scientific">Bos taurus</name>
    <name type="common">Bovine</name>
    <dbReference type="NCBI Taxonomy" id="9913"/>
    <lineage>
        <taxon>Eukaryota</taxon>
        <taxon>Metazoa</taxon>
        <taxon>Chordata</taxon>
        <taxon>Craniata</taxon>
        <taxon>Vertebrata</taxon>
        <taxon>Euteleostomi</taxon>
        <taxon>Mammalia</taxon>
        <taxon>Eutheria</taxon>
        <taxon>Laurasiatheria</taxon>
        <taxon>Artiodactyla</taxon>
        <taxon>Ruminantia</taxon>
        <taxon>Pecora</taxon>
        <taxon>Bovidae</taxon>
        <taxon>Bovinae</taxon>
        <taxon>Bos</taxon>
    </lineage>
</organism>
<reference key="1">
    <citation type="submission" date="2006-09" db="EMBL/GenBank/DDBJ databases">
        <authorList>
            <consortium name="NIH - Mammalian Gene Collection (MGC) project"/>
        </authorList>
    </citation>
    <scope>NUCLEOTIDE SEQUENCE [LARGE SCALE MRNA]</scope>
    <source>
        <strain>Hereford</strain>
        <tissue>Hippocampus</tissue>
    </source>
</reference>
<sequence>MPKSKRDKKVSLTKTAKKGLELKQNLIEELRKCVDTYKYLFIFSVANMRNSKLKDIRNAWKHSRMFFGKNKVMMVALGRSPSDEYKDNLHQVSKKLRGEVGLLFTNRTKEEVDEWFTKYTEMDYARAGNKATFTVNLDPGPLEQFPHSMEPQLRQLGLPTALKKGVVTLLSDYEVCKEGDVLTPEQARVLKLFGYEMAEFKVSIKYMWDAQSGRFQQMGDDLPESAPESEGESEEEDDS</sequence>
<accession>A4FV84</accession>
<gene>
    <name type="primary">MRTO4</name>
</gene>
<feature type="chain" id="PRO_0000319317" description="mRNA turnover protein 4 homolog">
    <location>
        <begin position="1"/>
        <end position="239"/>
    </location>
</feature>
<feature type="region of interest" description="Disordered" evidence="4">
    <location>
        <begin position="216"/>
        <end position="239"/>
    </location>
</feature>
<feature type="compositionally biased region" description="Acidic residues" evidence="4">
    <location>
        <begin position="221"/>
        <end position="239"/>
    </location>
</feature>
<feature type="modified residue" description="Phosphoserine" evidence="2">
    <location>
        <position position="225"/>
    </location>
</feature>
<feature type="modified residue" description="Phosphoserine" evidence="2">
    <location>
        <position position="229"/>
    </location>
</feature>
<feature type="modified residue" description="Phosphoserine" evidence="2">
    <location>
        <position position="233"/>
    </location>
</feature>
<comment type="function">
    <text evidence="1">Component of the ribosome assembly machinery. Nuclear paralog of the ribosomal protein P0, it binds pre-60S subunits at an early stage of assembly in the nucleolus, and is replaced by P0 in cytoplasmic pre-60S subunits and mature 80S ribosomes.</text>
</comment>
<comment type="subunit">
    <text evidence="3">Associates with the pre-60S ribosomal particle. Interacts with MINAS-60 (product of an alternative open reading frame of RBM10).</text>
</comment>
<comment type="subcellular location">
    <subcellularLocation>
        <location evidence="1">Nucleus</location>
        <location evidence="1">Nucleolus</location>
    </subcellularLocation>
    <subcellularLocation>
        <location evidence="1">Cytoplasm</location>
    </subcellularLocation>
    <text evidence="1">Shuttles between the nucleus and the cytoplasm.</text>
</comment>
<comment type="similarity">
    <text evidence="5">Belongs to the universal ribosomal protein uL10 family.</text>
</comment>
<dbReference type="EMBL" id="BC123852">
    <property type="protein sequence ID" value="AAI23853.1"/>
    <property type="molecule type" value="mRNA"/>
</dbReference>
<dbReference type="RefSeq" id="NP_001076868.1">
    <property type="nucleotide sequence ID" value="NM_001083399.1"/>
</dbReference>
<dbReference type="SMR" id="A4FV84"/>
<dbReference type="FunCoup" id="A4FV84">
    <property type="interactions" value="4179"/>
</dbReference>
<dbReference type="STRING" id="9913.ENSBTAP00000015861"/>
<dbReference type="PaxDb" id="9913-ENSBTAP00000015861"/>
<dbReference type="Ensembl" id="ENSBTAT00000015861.5">
    <property type="protein sequence ID" value="ENSBTAP00000015861.4"/>
    <property type="gene ID" value="ENSBTAG00000011951.6"/>
</dbReference>
<dbReference type="GeneID" id="509932"/>
<dbReference type="KEGG" id="bta:509932"/>
<dbReference type="CTD" id="51154"/>
<dbReference type="VEuPathDB" id="HostDB:ENSBTAG00000011951"/>
<dbReference type="VGNC" id="VGNC:31680">
    <property type="gene designation" value="MRTO4"/>
</dbReference>
<dbReference type="eggNOG" id="KOG0816">
    <property type="taxonomic scope" value="Eukaryota"/>
</dbReference>
<dbReference type="GeneTree" id="ENSGT00390000006238"/>
<dbReference type="HOGENOM" id="CLU_071690_3_0_1"/>
<dbReference type="InParanoid" id="A4FV84"/>
<dbReference type="OMA" id="LEWAENY"/>
<dbReference type="OrthoDB" id="10262308at2759"/>
<dbReference type="TreeFam" id="TF300111"/>
<dbReference type="Proteomes" id="UP000009136">
    <property type="component" value="Chromosome 2"/>
</dbReference>
<dbReference type="Bgee" id="ENSBTAG00000011951">
    <property type="expression patterns" value="Expressed in saliva-secreting gland and 107 other cell types or tissues"/>
</dbReference>
<dbReference type="GO" id="GO:0005737">
    <property type="term" value="C:cytoplasm"/>
    <property type="evidence" value="ECO:0007669"/>
    <property type="project" value="UniProtKB-SubCell"/>
</dbReference>
<dbReference type="GO" id="GO:0005730">
    <property type="term" value="C:nucleolus"/>
    <property type="evidence" value="ECO:0000318"/>
    <property type="project" value="GO_Central"/>
</dbReference>
<dbReference type="GO" id="GO:0030687">
    <property type="term" value="C:preribosome, large subunit precursor"/>
    <property type="evidence" value="ECO:0000318"/>
    <property type="project" value="GO_Central"/>
</dbReference>
<dbReference type="GO" id="GO:0000956">
    <property type="term" value="P:nuclear-transcribed mRNA catabolic process"/>
    <property type="evidence" value="ECO:0000318"/>
    <property type="project" value="GO_Central"/>
</dbReference>
<dbReference type="GO" id="GO:0000027">
    <property type="term" value="P:ribosomal large subunit assembly"/>
    <property type="evidence" value="ECO:0007669"/>
    <property type="project" value="InterPro"/>
</dbReference>
<dbReference type="GO" id="GO:0042273">
    <property type="term" value="P:ribosomal large subunit biogenesis"/>
    <property type="evidence" value="ECO:0000318"/>
    <property type="project" value="GO_Central"/>
</dbReference>
<dbReference type="GO" id="GO:0006364">
    <property type="term" value="P:rRNA processing"/>
    <property type="evidence" value="ECO:0000318"/>
    <property type="project" value="GO_Central"/>
</dbReference>
<dbReference type="CDD" id="cd05796">
    <property type="entry name" value="Ribosomal_P0_like"/>
    <property type="match status" value="1"/>
</dbReference>
<dbReference type="FunFam" id="3.30.70.1730:FF:000004">
    <property type="entry name" value="Ribosome assembly factor mrt4"/>
    <property type="match status" value="1"/>
</dbReference>
<dbReference type="FunFam" id="3.90.105.20:FF:000002">
    <property type="entry name" value="Ribosome assembly factor mrt4"/>
    <property type="match status" value="1"/>
</dbReference>
<dbReference type="Gene3D" id="3.30.70.1730">
    <property type="match status" value="1"/>
</dbReference>
<dbReference type="Gene3D" id="3.90.105.20">
    <property type="match status" value="1"/>
</dbReference>
<dbReference type="InterPro" id="IPR033867">
    <property type="entry name" value="Mrt4"/>
</dbReference>
<dbReference type="InterPro" id="IPR001790">
    <property type="entry name" value="Ribosomal_uL10"/>
</dbReference>
<dbReference type="InterPro" id="IPR040637">
    <property type="entry name" value="Ribosomal_uL10-like_insert"/>
</dbReference>
<dbReference type="InterPro" id="IPR043164">
    <property type="entry name" value="Ribosomal_uL10-like_insert_sf"/>
</dbReference>
<dbReference type="InterPro" id="IPR043141">
    <property type="entry name" value="Ribosomal_uL10-like_sf"/>
</dbReference>
<dbReference type="InterPro" id="IPR051742">
    <property type="entry name" value="Ribosome_Assembly_uL10"/>
</dbReference>
<dbReference type="PANTHER" id="PTHR45841:SF1">
    <property type="entry name" value="MRNA TURNOVER PROTEIN 4 HOMOLOG"/>
    <property type="match status" value="1"/>
</dbReference>
<dbReference type="PANTHER" id="PTHR45841">
    <property type="entry name" value="MRNA TURNOVER PROTEIN 4 MRTO4"/>
    <property type="match status" value="1"/>
</dbReference>
<dbReference type="Pfam" id="PF00466">
    <property type="entry name" value="Ribosomal_L10"/>
    <property type="match status" value="1"/>
</dbReference>
<dbReference type="Pfam" id="PF17777">
    <property type="entry name" value="RL10P_insert"/>
    <property type="match status" value="1"/>
</dbReference>
<dbReference type="SUPFAM" id="SSF160369">
    <property type="entry name" value="Ribosomal protein L10-like"/>
    <property type="match status" value="1"/>
</dbReference>
<protein>
    <recommendedName>
        <fullName evidence="1">mRNA turnover protein 4 homolog</fullName>
    </recommendedName>
    <alternativeName>
        <fullName evidence="1 5">Ribosome assembly factor MRTO4</fullName>
    </alternativeName>
</protein>
<proteinExistence type="evidence at transcript level"/>
<evidence type="ECO:0000250" key="1">
    <source>
        <dbReference type="UniProtKB" id="P33201"/>
    </source>
</evidence>
<evidence type="ECO:0000250" key="2">
    <source>
        <dbReference type="UniProtKB" id="Q9D0I8"/>
    </source>
</evidence>
<evidence type="ECO:0000250" key="3">
    <source>
        <dbReference type="UniProtKB" id="Q9UKD2"/>
    </source>
</evidence>
<evidence type="ECO:0000256" key="4">
    <source>
        <dbReference type="SAM" id="MobiDB-lite"/>
    </source>
</evidence>
<evidence type="ECO:0000305" key="5"/>
<keyword id="KW-0963">Cytoplasm</keyword>
<keyword id="KW-0539">Nucleus</keyword>
<keyword id="KW-0597">Phosphoprotein</keyword>
<keyword id="KW-1185">Reference proteome</keyword>
<keyword id="KW-0690">Ribosome biogenesis</keyword>